<accession>P57572</accession>
<sequence length="144" mass="15757">MRLNTLSPANGARHSRKRLGRGIGSGFGKTSGRGHKGQKSRSGSSIRRGFEGGQMPLYRRLPKFGFNSRKKNITTEVRLSDLSNLSTNIIDLNVLKQENIIKKNIKYAKIILSGKLTVPLIIRGLLVSKGARSEIENTGGKVEG</sequence>
<evidence type="ECO:0000255" key="1">
    <source>
        <dbReference type="HAMAP-Rule" id="MF_01341"/>
    </source>
</evidence>
<evidence type="ECO:0000256" key="2">
    <source>
        <dbReference type="SAM" id="MobiDB-lite"/>
    </source>
</evidence>
<evidence type="ECO:0000305" key="3"/>
<comment type="function">
    <text evidence="1">Binds to the 23S rRNA.</text>
</comment>
<comment type="subunit">
    <text evidence="1">Part of the 50S ribosomal subunit.</text>
</comment>
<comment type="similarity">
    <text evidence="1">Belongs to the universal ribosomal protein uL15 family.</text>
</comment>
<organism>
    <name type="scientific">Buchnera aphidicola subsp. Acyrthosiphon pisum (strain APS)</name>
    <name type="common">Acyrthosiphon pisum symbiotic bacterium</name>
    <dbReference type="NCBI Taxonomy" id="107806"/>
    <lineage>
        <taxon>Bacteria</taxon>
        <taxon>Pseudomonadati</taxon>
        <taxon>Pseudomonadota</taxon>
        <taxon>Gammaproteobacteria</taxon>
        <taxon>Enterobacterales</taxon>
        <taxon>Erwiniaceae</taxon>
        <taxon>Buchnera</taxon>
    </lineage>
</organism>
<gene>
    <name evidence="1" type="primary">rplO</name>
    <name type="ordered locus">BU505</name>
</gene>
<proteinExistence type="inferred from homology"/>
<reference key="1">
    <citation type="journal article" date="2000" name="Nature">
        <title>Genome sequence of the endocellular bacterial symbiont of aphids Buchnera sp. APS.</title>
        <authorList>
            <person name="Shigenobu S."/>
            <person name="Watanabe H."/>
            <person name="Hattori M."/>
            <person name="Sakaki Y."/>
            <person name="Ishikawa H."/>
        </authorList>
    </citation>
    <scope>NUCLEOTIDE SEQUENCE [LARGE SCALE GENOMIC DNA]</scope>
    <source>
        <strain>APS</strain>
    </source>
</reference>
<dbReference type="EMBL" id="BA000003">
    <property type="protein sequence ID" value="BAB13198.1"/>
    <property type="molecule type" value="Genomic_DNA"/>
</dbReference>
<dbReference type="RefSeq" id="NP_240312.1">
    <property type="nucleotide sequence ID" value="NC_002528.1"/>
</dbReference>
<dbReference type="RefSeq" id="WP_009874456.1">
    <property type="nucleotide sequence ID" value="NZ_AP036055.1"/>
</dbReference>
<dbReference type="SMR" id="P57572"/>
<dbReference type="STRING" id="563178.BUAP5A_498"/>
<dbReference type="EnsemblBacteria" id="BAB13198">
    <property type="protein sequence ID" value="BAB13198"/>
    <property type="gene ID" value="BAB13198"/>
</dbReference>
<dbReference type="KEGG" id="buc:BU505"/>
<dbReference type="PATRIC" id="fig|107806.10.peg.510"/>
<dbReference type="eggNOG" id="COG0200">
    <property type="taxonomic scope" value="Bacteria"/>
</dbReference>
<dbReference type="HOGENOM" id="CLU_055188_4_2_6"/>
<dbReference type="Proteomes" id="UP000001806">
    <property type="component" value="Chromosome"/>
</dbReference>
<dbReference type="GO" id="GO:0022625">
    <property type="term" value="C:cytosolic large ribosomal subunit"/>
    <property type="evidence" value="ECO:0007669"/>
    <property type="project" value="TreeGrafter"/>
</dbReference>
<dbReference type="GO" id="GO:0019843">
    <property type="term" value="F:rRNA binding"/>
    <property type="evidence" value="ECO:0007669"/>
    <property type="project" value="UniProtKB-UniRule"/>
</dbReference>
<dbReference type="GO" id="GO:0003735">
    <property type="term" value="F:structural constituent of ribosome"/>
    <property type="evidence" value="ECO:0007669"/>
    <property type="project" value="InterPro"/>
</dbReference>
<dbReference type="GO" id="GO:0006412">
    <property type="term" value="P:translation"/>
    <property type="evidence" value="ECO:0007669"/>
    <property type="project" value="UniProtKB-UniRule"/>
</dbReference>
<dbReference type="Gene3D" id="3.100.10.10">
    <property type="match status" value="1"/>
</dbReference>
<dbReference type="HAMAP" id="MF_01341">
    <property type="entry name" value="Ribosomal_uL15"/>
    <property type="match status" value="1"/>
</dbReference>
<dbReference type="InterPro" id="IPR030878">
    <property type="entry name" value="Ribosomal_uL15"/>
</dbReference>
<dbReference type="InterPro" id="IPR021131">
    <property type="entry name" value="Ribosomal_uL15/eL18"/>
</dbReference>
<dbReference type="InterPro" id="IPR036227">
    <property type="entry name" value="Ribosomal_uL15/eL18_sf"/>
</dbReference>
<dbReference type="InterPro" id="IPR005749">
    <property type="entry name" value="Ribosomal_uL15_bac-type"/>
</dbReference>
<dbReference type="InterPro" id="IPR001196">
    <property type="entry name" value="Ribosomal_uL15_CS"/>
</dbReference>
<dbReference type="NCBIfam" id="TIGR01071">
    <property type="entry name" value="rplO_bact"/>
    <property type="match status" value="1"/>
</dbReference>
<dbReference type="PANTHER" id="PTHR12934">
    <property type="entry name" value="50S RIBOSOMAL PROTEIN L15"/>
    <property type="match status" value="1"/>
</dbReference>
<dbReference type="PANTHER" id="PTHR12934:SF11">
    <property type="entry name" value="LARGE RIBOSOMAL SUBUNIT PROTEIN UL15M"/>
    <property type="match status" value="1"/>
</dbReference>
<dbReference type="Pfam" id="PF00828">
    <property type="entry name" value="Ribosomal_L27A"/>
    <property type="match status" value="1"/>
</dbReference>
<dbReference type="SUPFAM" id="SSF52080">
    <property type="entry name" value="Ribosomal proteins L15p and L18e"/>
    <property type="match status" value="1"/>
</dbReference>
<dbReference type="PROSITE" id="PS00475">
    <property type="entry name" value="RIBOSOMAL_L15"/>
    <property type="match status" value="1"/>
</dbReference>
<keyword id="KW-1185">Reference proteome</keyword>
<keyword id="KW-0687">Ribonucleoprotein</keyword>
<keyword id="KW-0689">Ribosomal protein</keyword>
<keyword id="KW-0694">RNA-binding</keyword>
<keyword id="KW-0699">rRNA-binding</keyword>
<protein>
    <recommendedName>
        <fullName evidence="1">Large ribosomal subunit protein uL15</fullName>
    </recommendedName>
    <alternativeName>
        <fullName evidence="3">50S ribosomal protein L15</fullName>
    </alternativeName>
</protein>
<name>RL15_BUCAI</name>
<feature type="chain" id="PRO_0000104694" description="Large ribosomal subunit protein uL15">
    <location>
        <begin position="1"/>
        <end position="144"/>
    </location>
</feature>
<feature type="region of interest" description="Disordered" evidence="2">
    <location>
        <begin position="1"/>
        <end position="52"/>
    </location>
</feature>
<feature type="compositionally biased region" description="Gly residues" evidence="2">
    <location>
        <begin position="21"/>
        <end position="31"/>
    </location>
</feature>